<organism>
    <name type="scientific">Yellow fever virus (isolate Ivory Coast/1999)</name>
    <name type="common">YFV</name>
    <dbReference type="NCBI Taxonomy" id="407136"/>
    <lineage>
        <taxon>Viruses</taxon>
        <taxon>Riboviria</taxon>
        <taxon>Orthornavirae</taxon>
        <taxon>Kitrinoviricota</taxon>
        <taxon>Flasuviricetes</taxon>
        <taxon>Amarillovirales</taxon>
        <taxon>Flaviviridae</taxon>
        <taxon>Orthoflavivirus</taxon>
        <taxon>Orthoflavivirus flavi</taxon>
    </lineage>
</organism>
<evidence type="ECO:0000250" key="1"/>
<evidence type="ECO:0000250" key="2">
    <source>
        <dbReference type="UniProtKB" id="P03314"/>
    </source>
</evidence>
<evidence type="ECO:0000250" key="3">
    <source>
        <dbReference type="UniProtKB" id="P14335"/>
    </source>
</evidence>
<evidence type="ECO:0000250" key="4">
    <source>
        <dbReference type="UniProtKB" id="P14336"/>
    </source>
</evidence>
<evidence type="ECO:0000250" key="5">
    <source>
        <dbReference type="UniProtKB" id="P14340"/>
    </source>
</evidence>
<evidence type="ECO:0000250" key="6">
    <source>
        <dbReference type="UniProtKB" id="P17763"/>
    </source>
</evidence>
<evidence type="ECO:0000250" key="7">
    <source>
        <dbReference type="UniProtKB" id="P29990"/>
    </source>
</evidence>
<evidence type="ECO:0000250" key="8">
    <source>
        <dbReference type="UniProtKB" id="Q32ZE1"/>
    </source>
</evidence>
<evidence type="ECO:0000250" key="9">
    <source>
        <dbReference type="UniProtKB" id="Q6YMS4"/>
    </source>
</evidence>
<evidence type="ECO:0000250" key="10">
    <source>
        <dbReference type="UniProtKB" id="Q9Q6P4"/>
    </source>
</evidence>
<evidence type="ECO:0000255" key="11"/>
<evidence type="ECO:0000255" key="12">
    <source>
        <dbReference type="PROSITE-ProRule" id="PRU00539"/>
    </source>
</evidence>
<evidence type="ECO:0000255" key="13">
    <source>
        <dbReference type="PROSITE-ProRule" id="PRU00541"/>
    </source>
</evidence>
<evidence type="ECO:0000255" key="14">
    <source>
        <dbReference type="PROSITE-ProRule" id="PRU00859"/>
    </source>
</evidence>
<evidence type="ECO:0000255" key="15">
    <source>
        <dbReference type="PROSITE-ProRule" id="PRU00860"/>
    </source>
</evidence>
<evidence type="ECO:0000255" key="16">
    <source>
        <dbReference type="PROSITE-ProRule" id="PRU00924"/>
    </source>
</evidence>
<evidence type="ECO:0000256" key="17">
    <source>
        <dbReference type="SAM" id="MobiDB-lite"/>
    </source>
</evidence>
<evidence type="ECO:0000305" key="18"/>
<sequence length="3411" mass="378956">MSGRKAQGKTLGVNMVRRGVRSLSNKIKQKTKQIGNRPGPSRGVQGFIFFFLFNILTGKKITAHLKRLWKMLDPRQGLAVLRKVKRVVASLMRGLSSRKRRSHDALAVQFLILGMLLMAGGVTLVRKNRWLLLNVTSEDLGKTFSVGAGNCTTNILEAKYWCPDSMEYNCPNLSPREEPDDIDCWCYGVENVRVAYGKCDSAGRSRRSRRAIDLPTHENHGLKTRQEKWMTGRMGERQLQKIERWLVRNPFFAVTALTIAYLVGSNMTQRVVIALLVLAVGPAYSAHCIGITDRDFIEGVHGGTWVSATLEQDKCVTVMAPDKPSLDISLETVAIDGPAEARKVCYNAVLTHVKINDKCPSTGEAHLAEENEGDNACKRTYSDRGWGNGCGLFGKGSIVACAKFTCAKSMSLFEVDQTKIQYVIRAQLHVGAKQENWNTDIKTLKFDALSGSQEAEFTGYGKATLECQVQTAVDFGNSYIAEMEKESWIVDRQWAQDLTLPWQSGSGGVWREMHHLVEFEPPHAATIRVLALGNQEGSLKTALTGAMRVTKDTNDNNLYKLHGGHVSCRVKLSALTLKGTSYKMCTDKMSFVKNPTDTGHGTVVMQVKVPKGAPCKIPVIVADDLTAAINKGILVTVNPIASTNDDEVLIEVNPPFGDSYIIVGTGDSRLTYQWHKEGSSIGKLFTQTMKGAERLAVMGDAAWDFSSAGGFLTSVGKGIHTVFGSAFQGLFGGLSWITKVIMGAVLIWVGINTRNMTMSMSMILVGVIMMFLSLGVGADQGCAINFGKRELKCGDGIFIFRDSDDWLNKYSYYPEDPVKLASIVKASFEEGKCGLNSVDSLEHEMWRSRADEINAILEENEVDISVVVQDPKNVYQRGTHPFSRIRDGLQYGWKTWGKNLVFSPGRKNGSFIIDGKSRKECPFSNRVWNSFQIEEFGTGVFTTRVYMDAVFEYTIDCDGSILGAAVNGKKSAHGSPTFWMGSHEVNGTWMIHTLEALDYKECEWPLTHTIGTSVEESEMFMPRSIGGPVSSHNHIPGYKVQTNGPWMQVPLEVRREACPGTSVIIDGNCDGRGKSTRSTTDSGKIIPEWCCRSCTMPPVSFHGSDGCWYPMEIRPRKTHESHLVRSWVTAGEIHAVPFGLVSMMIAMEVVLRKRQGPKQMLVGGVVLLGAMLVGQVTLLDLLKLTVAVGLHFHEMNNGGDAMYMALIAAFSIRPGLLIGFGLRTLWSPRERLVLTLGAAMVEIALGGMMGGLWKYLNAVSLCILTINAVASRKASNTILPLMALLTPVTMAEVRLAAMLFCTVVIIGVLHQNSKDTSMQKTIPLVALTLTSYLGLTQPFLGLCAFLATRLFGRRSIPVNEALAAAGLVGVLAGLAFQEMENFLGPIAVGGILMMLVSVAGRVDGLELRKLGEVSWEEEAEISGSSARYDVALSEQGEFKLLSEEKVPWDQVVMTSLALVGAAIHPFALLLVLAGWLFHVKGARRSGDVLWDIPTPKIIEECEHLEDGIYGIFQSTFLGASQRGVGVAQGGVFHTMWHVTRGAFLVRNGKKLIPSWASVKEDLVAYGGSWKLEGRWDGEEEVQLIAAVPGKNVVNVQTKPSLFKVRNGGEIGAVALDYPSGTSGSPIVNRNGEVIGLYGNGILVGDNSFVSAISQTEVKEEGKEELQEIPTMLKKGMTTILDFHPGAGKTRRFLPQILAECARRRLRTLVLAPTRVVLSEMKEAFHGLDVKFHTQAFSAHGSGREVIDAMCHATLTYRMLEPTRIVNWEVIIMDEAHFLDPASIAARGWAAHRARANESATILMTATPPGTSDEFPHSNGEIEDVQTDIPSEPWNTGHDWILADKRPTAWFLPSIRAANVMAASLRKAGKSVVVLNRKTFEREYPTIKQKKPDFILATDIAEMGANLCVERVLDCRTAFKPVLVDEGRKVAIKGPLRISASSAAQRRGRIGRNPNRDGDSYYYSEPTSEDNAHHVCWLEASMLLDNMEVRGGMVAPLYGVEGTKTPVSPGEMRLRDDQRKVFRELVRNCDQPVWLSWQVAKAGLKTNDRKWCFEGPDEHEILNDSGETVKCRAPGGAKKPLRPRWCDERVSSDQSALADFIKFAEGRRGAAEVLVVLSELPDFLAKKGGEAMDTISVFLHSEEGSRAYRNALSMMPEAMTIAMLFILAGLLTSGMVIFFMSPKGISRMSMAMGTMAGCGYLMFLGGVKPTHISYIMLIFFVLMVVVIPEPGQQRSIQDNQVAYLIIGILTLVSVVAANELGMLEKTKEDLFGKKDLIPSSASPWSWPDLDLKPGAAWTVYVGIVTMLSPMLHHWIKVEYGNLSLSGIAQSASVLSFMDKGIPFMKMNISVIILLVSGWNSITVMPLLCGIGCAMLHWSLILPGIKAQQSKLAQRRVFHGVAKNPVVDGNPTVDIEEAPEMPALYEKKLALYLLLALSLASVAMCRTPFSLAEGIVLASAALGPLIEGNTSLLWNGPMAVSMTGVMRGNYYAFVGVMYNLWKMKTGRRGRANGKTLGEVWKRELNLLDKQQFELYKRTDIVEVDRDTARRHLAEGKVDTGVAVSRGTAKLRWFHERGYVKLEGRVTDLGCGRGGWCYYAAAQKEVSGVKGFTLGRDGHEKPMNVQSLGWNIITFKDKTDIHRLEPMKCDTLLCDIGESSSSSVTEGERTMRVLDTVEKWLACGVDNFCVKVLAPYMPDVLEKLELLQRRFGGTVIRNPLSRNSTHEMYYVSGARSNVTFTVNQTSRLLMRRMRRPTGKVTLEADVILPIGTRSVETDKGPLDREAIEERVERIKSEYMTTWFYDNDNPYRTWHYCGSYVTKTSGSAASMVNGVIKILTYPWDRIEEVTRMAMTDTTPFGQQRVFKEKVDTRAKDPPAGTRKIMKVVNRWLFRHLAREKNPRLCTKEEFIAKVRSHAAIGAYLEEQEQWKTANEAVQDPKFWELVDEERKLHQQGRCRTCVYNMMGKREKKLSEFGKAKGSRAIWYMWLGARYLEFEALGFLNEDHWASRENSGGGVEGIGLQYLGYVIRDLAAMDGGGFYADDTAGWDTRITEADLDDEQEILNYMSPHHKKLAQAVMEMTYKNKVVKVLRPAPGGKAYMDVISRRDQRGSGQVVTYALNTITNLKVQLIRMAEAEMVIHHQHVQDCDESALARLEAWLTEHGCDRLKRMAVSGDDCVVRPIDDRFGLALSHLNAMSKVRKDISEWQPSKGWNDWENVPFCSHHFHELHLKDGRRIVVPCREQDELIGRGRVSPGNGWMIKETACLSKAYANMWSLMYFHKRDMRLLSLAVSSAVPTSWVPQGRTTWSIHGKGEWMTTEDMLGVWNRVWITNNPHMQDKTVVKEWRDVPYLTKRQDKLCGSLIGMTNRATWASHIHLVIHRIRTLIGQEKYTDYLTVMDRYSVDADLQPGELI</sequence>
<accession>Q6J3P1</accession>
<accession>Q6PX46</accession>
<name>POLG_YEFVC</name>
<organismHost>
    <name type="scientific">Aedes aegypti</name>
    <name type="common">Yellowfever mosquito</name>
    <name type="synonym">Culex aegypti</name>
    <dbReference type="NCBI Taxonomy" id="7159"/>
</organismHost>
<organismHost>
    <name type="scientific">Aedes luteocephalus</name>
    <name type="common">Mosquito</name>
    <dbReference type="NCBI Taxonomy" id="299629"/>
</organismHost>
<organismHost>
    <name type="scientific">Aedes simpsoni</name>
    <dbReference type="NCBI Taxonomy" id="7161"/>
</organismHost>
<organismHost>
    <name type="scientific">Homo sapiens</name>
    <name type="common">Human</name>
    <dbReference type="NCBI Taxonomy" id="9606"/>
</organismHost>
<organismHost>
    <name type="scientific">Simiiformes</name>
    <dbReference type="NCBI Taxonomy" id="314293"/>
</organismHost>
<feature type="chain" id="PRO_0000405158" description="Genome polyprotein">
    <location>
        <begin position="1"/>
        <end position="3411"/>
    </location>
</feature>
<feature type="chain" id="PRO_0000261500" description="Capsid protein C" evidence="2">
    <location>
        <begin position="1"/>
        <end position="101"/>
    </location>
</feature>
<feature type="propeptide" id="PRO_0000261501" description="ER anchor for the capsid protein C, removed in mature form by serine protease NS3" evidence="2">
    <location>
        <begin position="102"/>
        <end position="121"/>
    </location>
</feature>
<feature type="chain" id="PRO_0000261502" description="Protein prM" evidence="7">
    <location>
        <begin position="122"/>
        <end position="285"/>
    </location>
</feature>
<feature type="chain" id="PRO_0000261503" description="Peptide pr" evidence="7">
    <location>
        <begin position="122"/>
        <end position="210"/>
    </location>
</feature>
<feature type="chain" id="PRO_0000261504" description="Small envelope protein M" evidence="7">
    <location>
        <begin position="211"/>
        <end position="285"/>
    </location>
</feature>
<feature type="chain" id="PRO_0000261505" description="Envelope protein E" evidence="7">
    <location>
        <begin position="286"/>
        <end position="778"/>
    </location>
</feature>
<feature type="chain" id="PRO_0000261506" description="Non-structural protein 1" evidence="2">
    <location>
        <begin position="779"/>
        <end position="1130"/>
    </location>
</feature>
<feature type="chain" id="PRO_0000261507" description="Non-structural protein 2A" evidence="7">
    <location>
        <begin position="1131"/>
        <end position="1354"/>
    </location>
</feature>
<feature type="chain" id="PRO_0000261508" description="Non-structural protein 2A-alpha" evidence="7">
    <location>
        <begin position="1131"/>
        <end position="1320"/>
    </location>
</feature>
<feature type="chain" id="PRO_0000261509" description="Serine protease subunit NS2B" evidence="2">
    <location>
        <begin position="1355"/>
        <end position="1484"/>
    </location>
</feature>
<feature type="chain" id="PRO_0000261510" description="Serine protease NS3" evidence="2">
    <location>
        <begin position="1485"/>
        <end position="2107"/>
    </location>
</feature>
<feature type="chain" id="PRO_0000261511" description="Non-structural protein 4A" evidence="2">
    <location>
        <begin position="2108"/>
        <end position="2233"/>
    </location>
</feature>
<feature type="peptide" id="PRO_0000261512" description="Peptide 2k">
    <location>
        <begin position="2234"/>
        <end position="2256"/>
    </location>
</feature>
<feature type="chain" id="PRO_0000261513" description="Non-structural protein 4B" evidence="2">
    <location>
        <begin position="2257"/>
        <end position="2506"/>
    </location>
</feature>
<feature type="chain" id="PRO_0000261514" description="RNA-directed RNA polymerase NS5" evidence="2">
    <location>
        <begin position="2507"/>
        <end position="3411"/>
    </location>
</feature>
<feature type="topological domain" description="Cytoplasmic" evidence="11">
    <location>
        <begin position="1"/>
        <end position="104"/>
    </location>
</feature>
<feature type="transmembrane region" description="Helical" evidence="11">
    <location>
        <begin position="105"/>
        <end position="125"/>
    </location>
</feature>
<feature type="topological domain" description="Extracellular" evidence="11">
    <location>
        <begin position="126"/>
        <end position="244"/>
    </location>
</feature>
<feature type="transmembrane region" description="Helical" evidence="11">
    <location>
        <begin position="245"/>
        <end position="265"/>
    </location>
</feature>
<feature type="topological domain" description="Cytoplasmic" evidence="11">
    <location>
        <begin position="266"/>
        <end position="270"/>
    </location>
</feature>
<feature type="transmembrane region" description="Helical" evidence="18">
    <location>
        <begin position="271"/>
        <end position="285"/>
    </location>
</feature>
<feature type="topological domain" description="Extracellular" evidence="11">
    <location>
        <begin position="286"/>
        <end position="730"/>
    </location>
</feature>
<feature type="transmembrane region" description="Helical" evidence="11">
    <location>
        <begin position="731"/>
        <end position="751"/>
    </location>
</feature>
<feature type="topological domain" description="Extracellular" evidence="11">
    <location>
        <begin position="752"/>
        <end position="757"/>
    </location>
</feature>
<feature type="transmembrane region" description="Helical" evidence="11">
    <location>
        <begin position="758"/>
        <end position="778"/>
    </location>
</feature>
<feature type="topological domain" description="Extracellular" evidence="2">
    <location>
        <begin position="779"/>
        <end position="1132"/>
    </location>
</feature>
<feature type="transmembrane region" description="Helical" evidence="2">
    <location>
        <begin position="1133"/>
        <end position="1153"/>
    </location>
</feature>
<feature type="topological domain" description="Cytoplasmic" evidence="2">
    <location>
        <begin position="1154"/>
        <end position="1201"/>
    </location>
</feature>
<feature type="transmembrane region" description="Helical" evidence="2">
    <location>
        <begin position="1202"/>
        <end position="1222"/>
    </location>
</feature>
<feature type="topological domain" description="Lumenal" evidence="2">
    <location>
        <begin position="1223"/>
        <end position="1287"/>
    </location>
</feature>
<feature type="transmembrane region" description="Helical" evidence="2">
    <location>
        <begin position="1288"/>
        <end position="1308"/>
    </location>
</feature>
<feature type="topological domain" description="Cytoplasmic" evidence="2">
    <location>
        <begin position="1309"/>
        <end position="1355"/>
    </location>
</feature>
<feature type="transmembrane region" description="Helical" evidence="2">
    <location>
        <begin position="1356"/>
        <end position="1376"/>
    </location>
</feature>
<feature type="topological domain" description="Lumenal" evidence="2">
    <location>
        <begin position="1377"/>
        <end position="1378"/>
    </location>
</feature>
<feature type="transmembrane region" description="Helical" evidence="11">
    <location>
        <begin position="1379"/>
        <end position="1399"/>
    </location>
</feature>
<feature type="topological domain" description="Cytoplasmic" evidence="11">
    <location>
        <begin position="1400"/>
        <end position="1456"/>
    </location>
</feature>
<feature type="intramembrane region" description="Helical" evidence="11">
    <location>
        <begin position="1457"/>
        <end position="1477"/>
    </location>
</feature>
<feature type="topological domain" description="Cytoplasmic" evidence="11">
    <location>
        <begin position="1478"/>
        <end position="2157"/>
    </location>
</feature>
<feature type="transmembrane region" description="Helical" evidence="11">
    <location>
        <begin position="2158"/>
        <end position="2178"/>
    </location>
</feature>
<feature type="topological domain" description="Lumenal" evidence="11">
    <location>
        <begin position="2179"/>
        <end position="2186"/>
    </location>
</feature>
<feature type="intramembrane region" description="Helical" evidence="11">
    <location>
        <begin position="2187"/>
        <end position="2207"/>
    </location>
</feature>
<feature type="topological domain" description="Lumenal" evidence="11">
    <location>
        <begin position="2208"/>
        <end position="2209"/>
    </location>
</feature>
<feature type="transmembrane region" description="Helical" evidence="11">
    <location>
        <begin position="2210"/>
        <end position="2230"/>
    </location>
</feature>
<feature type="topological domain" description="Cytoplasmic" evidence="11">
    <location>
        <begin position="2231"/>
        <end position="2241"/>
    </location>
</feature>
<feature type="transmembrane region" description="Helical; Note=Signal for NS4B" evidence="11">
    <location>
        <begin position="2242"/>
        <end position="2262"/>
    </location>
</feature>
<feature type="topological domain" description="Lumenal" evidence="11">
    <location>
        <begin position="2263"/>
        <end position="2293"/>
    </location>
</feature>
<feature type="intramembrane region" description="Helical" evidence="11">
    <location>
        <begin position="2294"/>
        <end position="2314"/>
    </location>
</feature>
<feature type="topological domain" description="Lumenal" evidence="11">
    <location>
        <begin position="2315"/>
        <end position="2360"/>
    </location>
</feature>
<feature type="transmembrane region" description="Helical" evidence="11">
    <location>
        <begin position="2361"/>
        <end position="2380"/>
    </location>
</feature>
<feature type="topological domain" description="Cytoplasmic" evidence="11">
    <location>
        <begin position="2381"/>
        <end position="2421"/>
    </location>
</feature>
<feature type="transmembrane region" description="Helical" evidence="11">
    <location>
        <begin position="2422"/>
        <end position="2442"/>
    </location>
</feature>
<feature type="topological domain" description="Lumenal" evidence="11">
    <location>
        <begin position="2443"/>
        <end position="2445"/>
    </location>
</feature>
<feature type="transmembrane region" description="Helical" evidence="11">
    <location>
        <begin position="2446"/>
        <end position="2466"/>
    </location>
</feature>
<feature type="topological domain" description="Cytoplasmic" evidence="11">
    <location>
        <begin position="2467"/>
        <end position="3411"/>
    </location>
</feature>
<feature type="domain" description="Peptidase S7" evidence="15">
    <location>
        <begin position="1485"/>
        <end position="1665"/>
    </location>
</feature>
<feature type="domain" description="Helicase ATP-binding" evidence="13">
    <location>
        <begin position="1669"/>
        <end position="1825"/>
    </location>
</feature>
<feature type="domain" description="Helicase C-terminal">
    <location>
        <begin position="1820"/>
        <end position="1997"/>
    </location>
</feature>
<feature type="domain" description="mRNA cap 0-1 NS5-type MT" evidence="16">
    <location>
        <begin position="2507"/>
        <end position="2771"/>
    </location>
</feature>
<feature type="domain" description="RdRp catalytic" evidence="12">
    <location>
        <begin position="3035"/>
        <end position="3187"/>
    </location>
</feature>
<feature type="region of interest" description="Fusion peptide" evidence="4">
    <location>
        <begin position="383"/>
        <end position="396"/>
    </location>
</feature>
<feature type="region of interest" description="Interacts with and activates NS3 protease" evidence="14">
    <location>
        <begin position="1407"/>
        <end position="1446"/>
    </location>
</feature>
<feature type="region of interest" description="Important for RNA-binding" evidence="5">
    <location>
        <begin position="1673"/>
        <end position="1676"/>
    </location>
</feature>
<feature type="region of interest" description="Disordered" evidence="17">
    <location>
        <begin position="1942"/>
        <end position="1961"/>
    </location>
</feature>
<feature type="short sequence motif" description="DEAH box" evidence="13">
    <location>
        <begin position="1773"/>
        <end position="1776"/>
    </location>
</feature>
<feature type="short sequence motif" description="Nuclear localization signal" evidence="1">
    <location>
        <begin position="2878"/>
        <end position="2911"/>
    </location>
</feature>
<feature type="active site" description="Charge relay system; for serine protease NS3 activity" evidence="15">
    <location>
        <position position="1537"/>
    </location>
</feature>
<feature type="active site" description="Charge relay system; for serine protease NS3 activity" evidence="15">
    <location>
        <position position="1561"/>
    </location>
</feature>
<feature type="active site" description="Charge relay system; for serine protease NS3 activity" evidence="15">
    <location>
        <position position="1622"/>
    </location>
</feature>
<feature type="active site" description="For 2'-O-MTase activity" evidence="9">
    <location>
        <position position="2567"/>
    </location>
</feature>
<feature type="active site" description="For 2'-O-MTase activity" evidence="9">
    <location>
        <position position="2652"/>
    </location>
</feature>
<feature type="active site" description="For 2'-O-MTase activity" evidence="9">
    <location>
        <position position="2688"/>
    </location>
</feature>
<feature type="active site" description="For 2'-O-MTase activity" evidence="9">
    <location>
        <position position="2724"/>
    </location>
</feature>
<feature type="binding site" evidence="13">
    <location>
        <begin position="1682"/>
        <end position="1689"/>
    </location>
    <ligand>
        <name>ATP</name>
        <dbReference type="ChEBI" id="CHEBI:30616"/>
    </ligand>
</feature>
<feature type="binding site" evidence="16">
    <location>
        <position position="2562"/>
    </location>
    <ligand>
        <name>S-adenosyl-L-methionine</name>
        <dbReference type="ChEBI" id="CHEBI:59789"/>
    </ligand>
</feature>
<feature type="binding site" evidence="16">
    <location>
        <position position="2592"/>
    </location>
    <ligand>
        <name>S-adenosyl-L-methionine</name>
        <dbReference type="ChEBI" id="CHEBI:59789"/>
    </ligand>
</feature>
<feature type="binding site" evidence="16">
    <location>
        <position position="2593"/>
    </location>
    <ligand>
        <name>S-adenosyl-L-methionine</name>
        <dbReference type="ChEBI" id="CHEBI:59789"/>
    </ligand>
</feature>
<feature type="binding site" evidence="16">
    <location>
        <position position="2610"/>
    </location>
    <ligand>
        <name>S-adenosyl-L-methionine</name>
        <dbReference type="ChEBI" id="CHEBI:59789"/>
    </ligand>
</feature>
<feature type="binding site" evidence="16">
    <location>
        <position position="2611"/>
    </location>
    <ligand>
        <name>S-adenosyl-L-methionine</name>
        <dbReference type="ChEBI" id="CHEBI:59789"/>
    </ligand>
</feature>
<feature type="binding site" evidence="16">
    <location>
        <position position="2637"/>
    </location>
    <ligand>
        <name>S-adenosyl-L-methionine</name>
        <dbReference type="ChEBI" id="CHEBI:59789"/>
    </ligand>
</feature>
<feature type="binding site" evidence="16">
    <location>
        <position position="2638"/>
    </location>
    <ligand>
        <name>S-adenosyl-L-methionine</name>
        <dbReference type="ChEBI" id="CHEBI:59789"/>
    </ligand>
</feature>
<feature type="binding site" evidence="16">
    <location>
        <position position="2653"/>
    </location>
    <ligand>
        <name>S-adenosyl-L-methionine</name>
        <dbReference type="ChEBI" id="CHEBI:59789"/>
    </ligand>
</feature>
<feature type="binding site" evidence="16">
    <location>
        <position position="2726"/>
    </location>
    <ligand>
        <name>S-adenosyl-L-methionine</name>
        <dbReference type="ChEBI" id="CHEBI:59789"/>
    </ligand>
</feature>
<feature type="binding site" evidence="3">
    <location>
        <position position="2945"/>
    </location>
    <ligand>
        <name>Zn(2+)</name>
        <dbReference type="ChEBI" id="CHEBI:29105"/>
        <label>1</label>
    </ligand>
</feature>
<feature type="binding site" evidence="3">
    <location>
        <position position="2949"/>
    </location>
    <ligand>
        <name>Zn(2+)</name>
        <dbReference type="ChEBI" id="CHEBI:29105"/>
        <label>1</label>
    </ligand>
</feature>
<feature type="binding site" evidence="3">
    <location>
        <position position="2954"/>
    </location>
    <ligand>
        <name>Zn(2+)</name>
        <dbReference type="ChEBI" id="CHEBI:29105"/>
        <label>1</label>
    </ligand>
</feature>
<feature type="binding site" evidence="3">
    <location>
        <position position="2957"/>
    </location>
    <ligand>
        <name>Zn(2+)</name>
        <dbReference type="ChEBI" id="CHEBI:29105"/>
        <label>1</label>
    </ligand>
</feature>
<feature type="binding site" evidence="3">
    <location>
        <position position="3222"/>
    </location>
    <ligand>
        <name>Zn(2+)</name>
        <dbReference type="ChEBI" id="CHEBI:29105"/>
        <label>2</label>
    </ligand>
</feature>
<feature type="binding site" evidence="3">
    <location>
        <position position="3238"/>
    </location>
    <ligand>
        <name>Zn(2+)</name>
        <dbReference type="ChEBI" id="CHEBI:29105"/>
        <label>2</label>
    </ligand>
</feature>
<feature type="binding site" evidence="3">
    <location>
        <position position="3357"/>
    </location>
    <ligand>
        <name>Zn(2+)</name>
        <dbReference type="ChEBI" id="CHEBI:29105"/>
        <label>2</label>
    </ligand>
</feature>
<feature type="site" description="Cleavage; by viral protease NS3" evidence="2">
    <location>
        <begin position="101"/>
        <end position="102"/>
    </location>
</feature>
<feature type="site" description="Cleavage; by host signal peptidase" evidence="2">
    <location>
        <begin position="121"/>
        <end position="122"/>
    </location>
</feature>
<feature type="site" description="Cleavage; by host furin" evidence="7">
    <location>
        <begin position="210"/>
        <end position="211"/>
    </location>
</feature>
<feature type="site" description="Cleavage; by host signal peptidase" evidence="7">
    <location>
        <begin position="285"/>
        <end position="286"/>
    </location>
</feature>
<feature type="site" description="Cleavage; by host signal peptidase" evidence="2">
    <location>
        <begin position="778"/>
        <end position="779"/>
    </location>
</feature>
<feature type="site" description="Cleavage; by host" evidence="7">
    <location>
        <begin position="1130"/>
        <end position="1131"/>
    </location>
</feature>
<feature type="site" description="Cleavage; by viral protease NS3" evidence="7">
    <location>
        <begin position="1354"/>
        <end position="1355"/>
    </location>
</feature>
<feature type="site" description="Cleavage; by autolysis" evidence="2">
    <location>
        <begin position="1484"/>
        <end position="1485"/>
    </location>
</feature>
<feature type="site" description="Involved in NS3 ATPase and RTPase activities" evidence="3">
    <location>
        <position position="1945"/>
    </location>
</feature>
<feature type="site" description="Involved in NS3 ATPase and RTPase activities" evidence="3">
    <location>
        <position position="1948"/>
    </location>
</feature>
<feature type="site" description="Cleavage; by autolysis" evidence="2">
    <location>
        <begin position="2107"/>
        <end position="2108"/>
    </location>
</feature>
<feature type="site" description="Cleavage; by viral protease NS3" evidence="7">
    <location>
        <begin position="2233"/>
        <end position="2234"/>
    </location>
</feature>
<feature type="site" description="Cleavage; by host signal peptidase" evidence="7">
    <location>
        <begin position="2256"/>
        <end position="2257"/>
    </location>
</feature>
<feature type="site" description="Cleavage; by viral protease NS3" evidence="2">
    <location>
        <begin position="2506"/>
        <end position="2507"/>
    </location>
</feature>
<feature type="site" description="mRNA cap binding" evidence="16">
    <location>
        <position position="2519"/>
    </location>
</feature>
<feature type="site" description="mRNA cap binding; via carbonyl oxygen" evidence="16">
    <location>
        <position position="2522"/>
    </location>
</feature>
<feature type="site" description="mRNA cap binding" evidence="16">
    <location>
        <position position="2523"/>
    </location>
</feature>
<feature type="site" description="mRNA cap binding; via carbonyl oxygen" evidence="16">
    <location>
        <position position="2525"/>
    </location>
</feature>
<feature type="site" description="mRNA cap binding" evidence="16">
    <location>
        <position position="2530"/>
    </location>
</feature>
<feature type="site" description="mRNA cap binding" evidence="16">
    <location>
        <position position="2534"/>
    </location>
</feature>
<feature type="site" description="Essential for 2'-O-methyltransferase activity" evidence="16">
    <location>
        <position position="2567"/>
    </location>
</feature>
<feature type="site" description="Essential for 2'-O-methyltransferase and N-7 methyltransferase activity" evidence="16">
    <location>
        <position position="2652"/>
    </location>
</feature>
<feature type="site" description="mRNA cap binding" evidence="16">
    <location>
        <position position="2656"/>
    </location>
</feature>
<feature type="site" description="Essential for 2'-O-methyltransferase activity" evidence="16">
    <location>
        <position position="2688"/>
    </location>
</feature>
<feature type="site" description="mRNA cap binding" evidence="16">
    <location>
        <position position="2719"/>
    </location>
</feature>
<feature type="site" description="mRNA cap binding" evidence="16">
    <location>
        <position position="2721"/>
    </location>
</feature>
<feature type="site" description="Essential for 2'-O-methyltransferase activity" evidence="16">
    <location>
        <position position="2724"/>
    </location>
</feature>
<feature type="modified residue" description="N6-acetyllysine; by host" evidence="8">
    <location>
        <position position="1877"/>
    </location>
</feature>
<feature type="modified residue" description="Phosphoserine" evidence="2">
    <location>
        <position position="2562"/>
    </location>
</feature>
<feature type="glycosylation site" description="N-linked (GlcNAc...) asparagine; by host" evidence="11">
    <location>
        <position position="134"/>
    </location>
</feature>
<feature type="glycosylation site" description="N-linked (GlcNAc...) asparagine; by host" evidence="11">
    <location>
        <position position="150"/>
    </location>
</feature>
<feature type="glycosylation site" description="N-linked (GlcNAc...) asparagine; by host" evidence="11">
    <location>
        <position position="908"/>
    </location>
</feature>
<feature type="glycosylation site" description="N-linked (GlcNAc...) asparagine; by host" evidence="11">
    <location>
        <position position="986"/>
    </location>
</feature>
<feature type="disulfide bond" evidence="6">
    <location>
        <begin position="288"/>
        <end position="315"/>
    </location>
</feature>
<feature type="disulfide bond" evidence="6">
    <location>
        <begin position="345"/>
        <end position="406"/>
    </location>
</feature>
<feature type="disulfide bond" evidence="1">
    <location>
        <begin position="345"/>
        <end position="401"/>
    </location>
</feature>
<feature type="disulfide bond" evidence="6">
    <location>
        <begin position="359"/>
        <end position="390"/>
    </location>
</feature>
<feature type="disulfide bond" evidence="1">
    <location>
        <begin position="377"/>
        <end position="406"/>
    </location>
</feature>
<feature type="disulfide bond" evidence="6">
    <location>
        <begin position="377"/>
        <end position="401"/>
    </location>
</feature>
<feature type="disulfide bond" evidence="6">
    <location>
        <begin position="467"/>
        <end position="568"/>
    </location>
</feature>
<feature type="disulfide bond" evidence="6">
    <location>
        <begin position="585"/>
        <end position="615"/>
    </location>
</feature>
<feature type="disulfide bond" evidence="6">
    <location>
        <begin position="782"/>
        <end position="793"/>
    </location>
</feature>
<feature type="disulfide bond" evidence="6">
    <location>
        <begin position="833"/>
        <end position="921"/>
    </location>
</feature>
<feature type="disulfide bond" evidence="6">
    <location>
        <begin position="957"/>
        <end position="1002"/>
    </location>
</feature>
<feature type="disulfide bond" evidence="6">
    <location>
        <begin position="1058"/>
        <end position="1107"/>
    </location>
</feature>
<feature type="disulfide bond" evidence="6">
    <location>
        <begin position="1069"/>
        <end position="1091"/>
    </location>
</feature>
<feature type="disulfide bond" evidence="6">
    <location>
        <begin position="1090"/>
        <end position="1094"/>
    </location>
</feature>
<feature type="sequence variant" description="In strain: Isolate Gambia 2001.">
    <original>A</original>
    <variation>T</variation>
    <location>
        <position position="107"/>
    </location>
</feature>
<feature type="sequence variant" description="In strain: Isolate Gambia 2001.">
    <original>F</original>
    <variation>L</variation>
    <location>
        <position position="110"/>
    </location>
</feature>
<feature type="sequence variant" description="In strain: Isolate Gambia 2001.">
    <original>L</original>
    <variation>I</variation>
    <location>
        <position position="116"/>
    </location>
</feature>
<feature type="sequence variant" description="In strain: Isolate Gambia 2001.">
    <original>A</original>
    <variation>T</variation>
    <location>
        <position position="148"/>
    </location>
</feature>
<feature type="sequence variant" description="In strain: Isolate Gambia 2001.">
    <original>L</original>
    <variation>F</variation>
    <location>
        <position position="712"/>
    </location>
</feature>
<feature type="sequence variant" description="In strain: Isolate Gambia 2001.">
    <original>N</original>
    <variation>S</variation>
    <location>
        <position position="899"/>
    </location>
</feature>
<feature type="sequence variant" description="In strain: Isolate Gambia 2001.">
    <original>T</original>
    <variation>I</variation>
    <location>
        <position position="1185"/>
    </location>
</feature>
<feature type="sequence variant" description="In strain: Isolate Gambia 2001.">
    <original>A</original>
    <variation>T</variation>
    <location>
        <position position="1297"/>
    </location>
</feature>
<feature type="sequence variant" description="In strain: Isolate Gambia 2001.">
    <original>S</original>
    <variation>N</variation>
    <location>
        <position position="1433"/>
    </location>
</feature>
<feature type="sequence variant" description="In strain: Isolate Gambia 2001.">
    <original>D</original>
    <variation>E</variation>
    <location>
        <position position="2056"/>
    </location>
</feature>
<feature type="sequence variant" description="In strain: Isolate Gambia 2001.">
    <original>A</original>
    <variation>V</variation>
    <location>
        <position position="2161"/>
    </location>
</feature>
<feature type="sequence variant" description="In strain: Isolate Gambia 2001.">
    <original>M</original>
    <variation>T</variation>
    <location>
        <position position="2373"/>
    </location>
</feature>
<feature type="sequence variant" description="In strain: Isolate Gambia 2001.">
    <original>A</original>
    <variation>S</variation>
    <location>
        <position position="2438"/>
    </location>
</feature>
<feature type="sequence variant" description="In strain: Isolate Gambia 2001.">
    <original>M</original>
    <variation>V</variation>
    <location>
        <position position="2644"/>
    </location>
</feature>
<comment type="function">
    <molecule>Capsid protein C</molecule>
    <text evidence="6">Plays a role in virus budding by binding to the cell membrane and gathering the viral RNA into a nucleocapsid that forms the core of a mature virus particle. During virus entry, may induce genome penetration into the host cytoplasm after hemifusion induced by the surface proteins. Can migrate to the cell nucleus where it modulates host functions.</text>
</comment>
<comment type="function">
    <molecule>Capsid protein C</molecule>
    <text evidence="2">Inhibits RNA silencing by interfering with host Dicer.</text>
</comment>
<comment type="function">
    <molecule>Peptide pr</molecule>
    <text evidence="6">Prevents premature fusion activity of envelope proteins in trans-Golgi by binding to envelope protein E at pH6.0. After virion release in extracellular space, gets dissociated from E dimers.</text>
</comment>
<comment type="function">
    <molecule>Protein prM</molecule>
    <text evidence="6">Acts as a chaperone for envelope protein E during intracellular virion assembly by masking and inactivating envelope protein E fusion peptide. prM is the only viral peptide matured by host furin in the trans-Golgi network probably to avoid catastrophic activation of the viral fusion activity in acidic Golgi compartment prior to virion release. prM-E cleavage is inefficient, and many virions are only partially matured. These uncleaved prM would play a role in immune evasion.</text>
</comment>
<comment type="function">
    <molecule>Small envelope protein M</molecule>
    <text evidence="6">May play a role in virus budding. Exerts cytotoxic effects by activating a mitochondrial apoptotic pathway through M ectodomain. May display a viroporin activity.</text>
</comment>
<comment type="function">
    <molecule>Envelope protein E</molecule>
    <text evidence="6">Binds to host cell surface receptor and mediates fusion between viral and cellular membranes. Envelope protein is synthesized in the endoplasmic reticulum in the form of heterodimer with protein prM. They play a role in virion budding in the ER, and the newly formed immature particle is covered with 60 spikes composed of heterodimer between precursor prM and envelope protein E. The virion is transported to the Golgi apparatus where the low pH causes dissociation of PrM-E heterodimers and formation of E homodimers. prM-E cleavage is inefficient, and many virions are only partially matured. These uncleaved prM would play a role in immune evasion.</text>
</comment>
<comment type="function">
    <molecule>Non-structural protein 1</molecule>
    <text evidence="10">Involved in immune evasion, pathogenesis and viral replication. Once cleaved off the polyprotein, is targeted to three destinations: the viral replication cycle, the plasma membrane and the extracellular compartment. Essential for viral replication. Required for formation of the replication complex and recruitment of other non-structural proteins to the ER-derived membrane structures. Excreted as a hexameric lipoparticle that plays a role against host immune response. Antagonizing the complement function. Binds to the host macrophages and dendritic cells. Inhibits signal transduction originating from Toll-like receptor 3 (TLR3).</text>
</comment>
<comment type="function">
    <molecule>Non-structural protein 2A</molecule>
    <text evidence="6">Component of the viral RNA replication complex that functions in virion assembly and antagonizes the host immune response.</text>
</comment>
<comment type="function">
    <molecule>Serine protease subunit NS2B</molecule>
    <text evidence="6 14">Required cofactor for the serine protease function of NS3. May have membrane-destabilizing activity and form viroporins (By similarity).</text>
</comment>
<comment type="function">
    <molecule>Serine protease NS3</molecule>
    <text evidence="2 15">Displays three enzymatic activities: serine protease, NTPase and RNA helicase. NS3 serine protease, in association with NS2B, performs its autocleavage and cleaves the polyprotein at dibasic sites in the cytoplasm: C-prM, NS2A-NS2B, NS2B-NS3, NS3-NS4A, NS4A-2K and NS4B-NS5. NS3 RNA helicase binds RNA and unwinds dsRNA in the 3' to 5' direction. Also plays a role in virus assembly (By similarity).</text>
</comment>
<comment type="function">
    <molecule>Non-structural protein 4A</molecule>
    <text evidence="10">Regulates the ATPase activity of the NS3 helicase activity. NS4A allows NS3 helicase to conserve energy during unwinding.</text>
</comment>
<comment type="function">
    <molecule>Peptide 2k</molecule>
    <text evidence="6">Functions as a signal peptide for NS4B and is required for the interferon antagonism activity of the latter.</text>
</comment>
<comment type="function">
    <molecule>Non-structural protein 4B</molecule>
    <text evidence="10">Induces the formation of ER-derived membrane vesicles where the viral replication takes place. Inhibits interferon (IFN)-induced host STAT1 phosphorylation and nuclear translocation, thereby preventing the establishment of cellular antiviral state by blocking the IFN-alpha/beta pathway.</text>
</comment>
<comment type="function">
    <molecule>RNA-directed RNA polymerase NS5</molecule>
    <text evidence="2">Replicates the viral (+) and (-) RNA genome, and performs the capping of genomes in the cytoplasm. NS5 methylates viral RNA cap at guanine N-7 and ribose 2'-O positions (By similarity). Besides its role in RNA genome replication, also prevents the establishment of cellular antiviral state by blocking the interferon-alpha/beta (IFN-alpha/beta) signaling pathway. IFN-I induces binding of NS5 to host IFN-activated transcription factor STAT2, preventing its transcriptional activity. Host TRIM23 is the E3 ligase that interacts with and polyubiquitinates NS5 to promote its binding to STAT2 and trigger IFN-I signaling inhibition.</text>
</comment>
<comment type="catalytic activity">
    <reaction>
        <text>Selective hydrolysis of -Xaa-Xaa-|-Yaa- bonds in which each of the Xaa can be either Arg or Lys and Yaa can be either Ser or Ala.</text>
        <dbReference type="EC" id="3.4.21.91"/>
    </reaction>
</comment>
<comment type="catalytic activity">
    <reaction evidence="12">
        <text>RNA(n) + a ribonucleoside 5'-triphosphate = RNA(n+1) + diphosphate</text>
        <dbReference type="Rhea" id="RHEA:21248"/>
        <dbReference type="Rhea" id="RHEA-COMP:14527"/>
        <dbReference type="Rhea" id="RHEA-COMP:17342"/>
        <dbReference type="ChEBI" id="CHEBI:33019"/>
        <dbReference type="ChEBI" id="CHEBI:61557"/>
        <dbReference type="ChEBI" id="CHEBI:140395"/>
        <dbReference type="EC" id="2.7.7.48"/>
    </reaction>
</comment>
<comment type="catalytic activity">
    <reaction>
        <text>a ribonucleoside 5'-triphosphate + H2O = a ribonucleoside 5'-diphosphate + phosphate + H(+)</text>
        <dbReference type="Rhea" id="RHEA:23680"/>
        <dbReference type="ChEBI" id="CHEBI:15377"/>
        <dbReference type="ChEBI" id="CHEBI:15378"/>
        <dbReference type="ChEBI" id="CHEBI:43474"/>
        <dbReference type="ChEBI" id="CHEBI:57930"/>
        <dbReference type="ChEBI" id="CHEBI:61557"/>
        <dbReference type="EC" id="3.6.1.15"/>
    </reaction>
</comment>
<comment type="catalytic activity">
    <reaction>
        <text>ATP + H2O = ADP + phosphate + H(+)</text>
        <dbReference type="Rhea" id="RHEA:13065"/>
        <dbReference type="ChEBI" id="CHEBI:15377"/>
        <dbReference type="ChEBI" id="CHEBI:15378"/>
        <dbReference type="ChEBI" id="CHEBI:30616"/>
        <dbReference type="ChEBI" id="CHEBI:43474"/>
        <dbReference type="ChEBI" id="CHEBI:456216"/>
        <dbReference type="EC" id="3.6.4.13"/>
    </reaction>
</comment>
<comment type="catalytic activity">
    <reaction evidence="16">
        <text>a 5'-end (5'-triphosphoguanosine)-ribonucleoside in mRNA + S-adenosyl-L-methionine = a 5'-end (N(7)-methyl 5'-triphosphoguanosine)-ribonucleoside in mRNA + S-adenosyl-L-homocysteine</text>
        <dbReference type="Rhea" id="RHEA:67008"/>
        <dbReference type="Rhea" id="RHEA-COMP:17166"/>
        <dbReference type="Rhea" id="RHEA-COMP:17167"/>
        <dbReference type="ChEBI" id="CHEBI:57856"/>
        <dbReference type="ChEBI" id="CHEBI:59789"/>
        <dbReference type="ChEBI" id="CHEBI:156461"/>
        <dbReference type="ChEBI" id="CHEBI:167617"/>
        <dbReference type="EC" id="2.1.1.56"/>
    </reaction>
</comment>
<comment type="catalytic activity">
    <reaction evidence="16">
        <text>a 5'-end (N(7)-methyl 5'-triphosphoguanosine)-ribonucleoside in mRNA + S-adenosyl-L-methionine = a 5'-end (N(7)-methyl 5'-triphosphoguanosine)-(2'-O-methyl-ribonucleoside) in mRNA + S-adenosyl-L-homocysteine + H(+)</text>
        <dbReference type="Rhea" id="RHEA:67020"/>
        <dbReference type="Rhea" id="RHEA-COMP:17167"/>
        <dbReference type="Rhea" id="RHEA-COMP:17168"/>
        <dbReference type="ChEBI" id="CHEBI:15378"/>
        <dbReference type="ChEBI" id="CHEBI:57856"/>
        <dbReference type="ChEBI" id="CHEBI:59789"/>
        <dbReference type="ChEBI" id="CHEBI:156461"/>
        <dbReference type="ChEBI" id="CHEBI:167609"/>
        <dbReference type="EC" id="2.1.1.57"/>
    </reaction>
</comment>
<comment type="subunit">
    <molecule>Capsid protein C</molecule>
    <text evidence="6">Homodimer (By similarity). Interacts (via N-terminus) with host EXOC1 (via C-terminus); this interaction results in EXOC1 degradation through the proteasome degradation pathway (By similarity).</text>
</comment>
<comment type="subunit">
    <molecule>Protein prM</molecule>
    <text evidence="6">Forms heterodimers with envelope protein E in the endoplasmic reticulum and Golgi.</text>
</comment>
<comment type="subunit">
    <molecule>Envelope protein E</molecule>
    <text evidence="6">Homodimer; in the endoplasmic reticulum and Golgi (By similarity). Interacts with protein prM (By similarity). Interacts with non-structural protein 1 (By similarity).</text>
</comment>
<comment type="subunit">
    <molecule>Non-structural protein 1</molecule>
    <text evidence="6">Homodimer; Homohexamer when secreted (By similarity). Interacts with envelope protein E (By similarity).</text>
</comment>
<comment type="subunit">
    <molecule>Non-structural protein 2A</molecule>
    <text evidence="2">Interacts (via N-terminus) with serine protease NS3.</text>
</comment>
<comment type="subunit">
    <molecule>Serine protease subunit NS2B</molecule>
    <text evidence="6">Forms a heterodimer with serine protease NS3 (By similarity). May form homooligomers (By similarity).</text>
</comment>
<comment type="subunit">
    <molecule>Serine protease NS3</molecule>
    <text evidence="6">Forms a heterodimer with NS2B (By similarity). Interacts with non-structural protein 2A (via N-terminus) (By similarity). Interacts with NS4B (By similarity). Interacts with unphosphorylated RNA-directed RNA polymerase NS5; this interaction stimulates RNA-directed RNA polymerase NS5 guanylyltransferase activity (By similarity). NS3 interacts with host PDCD6IP; this interaction contributes to virion release (By similarity).</text>
</comment>
<comment type="subunit">
    <molecule>Non-structural protein 4B</molecule>
    <text evidence="6">Interacts with serine protease NS3 (By similarity).</text>
</comment>
<comment type="subunit">
    <molecule>RNA-directed RNA polymerase NS5</molecule>
    <text evidence="2">Homodimer (By similarity). Interacts with host STAT2; this interaction prevents the establishment of cellular antiviral state (By similarity). Interacts with serine protease NS3 (By similarity). Interacts with host TRIM23; this interaction leads to NS5 ubiquitination (By similarity).</text>
</comment>
<comment type="subcellular location">
    <molecule>Capsid protein C</molecule>
    <subcellularLocation>
        <location evidence="6">Virion</location>
    </subcellularLocation>
    <subcellularLocation>
        <location evidence="6">Host nucleus</location>
    </subcellularLocation>
    <subcellularLocation>
        <location evidence="6">Host cytoplasm</location>
        <location evidence="6">Host perinuclear region</location>
    </subcellularLocation>
    <subcellularLocation>
        <location evidence="6">Host cytoplasm</location>
    </subcellularLocation>
</comment>
<comment type="subcellular location">
    <molecule>Peptide pr</molecule>
    <subcellularLocation>
        <location evidence="6">Secreted</location>
    </subcellularLocation>
</comment>
<comment type="subcellular location">
    <molecule>Small envelope protein M</molecule>
    <subcellularLocation>
        <location evidence="2">Virion membrane</location>
        <topology evidence="2">Multi-pass membrane protein</topology>
    </subcellularLocation>
    <subcellularLocation>
        <location evidence="2">Host endoplasmic reticulum membrane</location>
        <topology evidence="11">Multi-pass membrane protein</topology>
    </subcellularLocation>
    <text evidence="2">ER membrane retention is mediated by the transmembrane domains.</text>
</comment>
<comment type="subcellular location">
    <molecule>Envelope protein E</molecule>
    <subcellularLocation>
        <location evidence="18">Virion membrane</location>
        <topology evidence="2">Multi-pass membrane protein</topology>
    </subcellularLocation>
    <subcellularLocation>
        <location evidence="2">Host endoplasmic reticulum membrane</location>
        <topology evidence="11">Multi-pass membrane protein</topology>
    </subcellularLocation>
    <text evidence="2">ER membrane retention is mediated by the transmembrane domains.</text>
</comment>
<comment type="subcellular location">
    <molecule>Non-structural protein 1</molecule>
    <subcellularLocation>
        <location evidence="6">Secreted</location>
    </subcellularLocation>
    <subcellularLocation>
        <location>Host endoplasmic reticulum membrane</location>
        <topology>Peripheral membrane protein</topology>
        <orientation evidence="6">Lumenal side</orientation>
    </subcellularLocation>
    <text evidence="10">Located in RE-derived vesicles hosting the replication complex.</text>
</comment>
<comment type="subcellular location">
    <molecule>Non-structural protein 2A</molecule>
    <subcellularLocation>
        <location evidence="6">Host endoplasmic reticulum membrane</location>
        <topology evidence="6">Multi-pass membrane protein</topology>
    </subcellularLocation>
</comment>
<comment type="subcellular location">
    <molecule>Serine protease subunit NS2B</molecule>
    <subcellularLocation>
        <location>Host endoplasmic reticulum membrane</location>
        <topology evidence="6">Multi-pass membrane protein</topology>
    </subcellularLocation>
</comment>
<comment type="subcellular location">
    <molecule>Serine protease NS3</molecule>
    <subcellularLocation>
        <location evidence="15">Host endoplasmic reticulum membrane</location>
        <topology evidence="15">Peripheral membrane protein</topology>
        <orientation evidence="15">Cytoplasmic side</orientation>
    </subcellularLocation>
    <text evidence="15">Remains non-covalently associated to serine protease subunit NS2B.</text>
</comment>
<comment type="subcellular location">
    <molecule>Non-structural protein 4A</molecule>
    <subcellularLocation>
        <location evidence="6">Host endoplasmic reticulum membrane</location>
        <topology evidence="6">Multi-pass membrane protein</topology>
    </subcellularLocation>
    <text evidence="6">Located in RE-associated vesicles hosting the replication complex.</text>
</comment>
<comment type="subcellular location">
    <molecule>Non-structural protein 4B</molecule>
    <subcellularLocation>
        <location evidence="6">Host endoplasmic reticulum membrane</location>
        <topology evidence="6">Multi-pass membrane protein</topology>
    </subcellularLocation>
    <text evidence="10">Located in RE-derived vesicles hosting the replication complex.</text>
</comment>
<comment type="subcellular location">
    <molecule>RNA-directed RNA polymerase NS5</molecule>
    <subcellularLocation>
        <location>Host endoplasmic reticulum membrane</location>
        <topology>Peripheral membrane protein</topology>
        <orientation>Cytoplasmic side</orientation>
    </subcellularLocation>
    <subcellularLocation>
        <location evidence="6">Host nucleus</location>
    </subcellularLocation>
    <text evidence="6">Located in RE-associated vesicles hosting the replication complex. NS5 protein is mainly localized in the nucleus rather than in ER vesicles.</text>
</comment>
<comment type="domain">
    <text evidence="6">The transmembrane domains of the small envelope protein M and envelope protein E contain an endoplasmic reticulum retention signal.</text>
</comment>
<comment type="PTM">
    <molecule>Genome polyprotein</molecule>
    <text evidence="2">Specific enzymatic cleavages in vivo yield mature proteins. The nascent capsid protein C contains a C-terminal hydrophobic domain that act as a signal sequence for translocation of prM into the lumen of the ER. Mature capsid protein C is cleaved at a site upstream of this hydrophobic domain by NS3. prM is cleaved in post-Golgi vesicles by a host furin, releasing the mature small envelope protein M, and peptide pr. Non-structural protein 2A-alpha, a C-terminally truncated form of non-structural protein 2A, results from partial cleavage by NS3. Specific enzymatic cleavages in vivo yield mature proteins peptide 2K acts as a signal sequence and is removed from the N-terminus of NS4B by the host signal peptidase in the ER lumen. Signal cleavage at the 2K-4B site requires a prior NS3 protease-mediated cleavage at the 4A-2K site.</text>
</comment>
<comment type="PTM">
    <molecule>Protein prM</molecule>
    <text evidence="6">Cleaved in post-Golgi vesicles by a host furin, releasing the mature small envelope protein M, and peptide pr. This cleavage is incomplete as up to 30% of viral particles still carry uncleaved prM.</text>
</comment>
<comment type="PTM">
    <molecule>Envelope protein E</molecule>
    <text evidence="6">N-glycosylated.</text>
</comment>
<comment type="PTM">
    <molecule>Non-structural protein 1</molecule>
    <text evidence="6">N-glycosylated. The excreted form is glycosylated and this is required for efficient secretion of the protein from infected cells.</text>
</comment>
<comment type="PTM">
    <text evidence="2">Polyubiquitinated; ubiquitination is probably mediated by host TRIM23 and is prerequisite for NS5-STAT2 interaction. NS5 is not ISGylated or sumoylated.</text>
</comment>
<comment type="PTM">
    <molecule>Serine protease NS3</molecule>
    <text evidence="8">Acetylated by host KAT5. Acetylation modulates NS3 RNA-binding and unwinding activities and plays an important positive role for viral replication.</text>
</comment>
<comment type="PTM">
    <molecule>RNA-directed RNA polymerase NS5</molecule>
    <text evidence="6">Phosphorylated on serines residues. This phosphorylation may trigger NS5 nuclear localization.</text>
</comment>
<comment type="similarity">
    <text evidence="16">In the N-terminal section; belongs to the class I-like SAM-binding methyltransferase superfamily. mRNA cap 0-1 NS5-type methyltransferase family.</text>
</comment>
<protein>
    <recommendedName>
        <fullName>Genome polyprotein</fullName>
    </recommendedName>
    <component>
        <recommendedName>
            <fullName>Capsid protein C</fullName>
        </recommendedName>
        <alternativeName>
            <fullName>Core protein</fullName>
        </alternativeName>
    </component>
    <component>
        <recommendedName>
            <fullName>Protein prM</fullName>
        </recommendedName>
    </component>
    <component>
        <recommendedName>
            <fullName>Peptide pr</fullName>
        </recommendedName>
    </component>
    <component>
        <recommendedName>
            <fullName>Small envelope protein M</fullName>
        </recommendedName>
        <alternativeName>
            <fullName>Matrix protein</fullName>
        </alternativeName>
    </component>
    <component>
        <recommendedName>
            <fullName>Envelope protein E</fullName>
        </recommendedName>
    </component>
    <component>
        <recommendedName>
            <fullName>Non-structural protein 1</fullName>
            <shortName>NS1</shortName>
        </recommendedName>
    </component>
    <component>
        <recommendedName>
            <fullName>Non-structural protein 2A</fullName>
            <shortName>NS2A</shortName>
        </recommendedName>
    </component>
    <component>
        <recommendedName>
            <fullName>Non-structural protein 2A-alpha</fullName>
            <shortName>NS2A-alpha</shortName>
        </recommendedName>
    </component>
    <component>
        <recommendedName>
            <fullName>Serine protease subunit NS2B</fullName>
        </recommendedName>
        <alternativeName>
            <fullName>Flavivirin protease NS2B regulatory subunit</fullName>
        </alternativeName>
        <alternativeName>
            <fullName>Non-structural protein 2B</fullName>
        </alternativeName>
    </component>
    <component>
        <recommendedName>
            <fullName>Serine protease NS3</fullName>
            <ecNumber>3.4.21.91</ecNumber>
            <ecNumber evidence="10">3.6.1.15</ecNumber>
            <ecNumber evidence="10">3.6.4.13</ecNumber>
        </recommendedName>
        <alternativeName>
            <fullName>Flavivirin protease NS3 catalytic subunit</fullName>
        </alternativeName>
        <alternativeName>
            <fullName>Non-structural protein 3</fullName>
        </alternativeName>
    </component>
    <component>
        <recommendedName>
            <fullName>Non-structural protein 4A</fullName>
            <shortName>NS4A</shortName>
        </recommendedName>
    </component>
    <component>
        <recommendedName>
            <fullName>Peptide 2k</fullName>
        </recommendedName>
    </component>
    <component>
        <recommendedName>
            <fullName>Non-structural protein 4B</fullName>
            <shortName>NS4B</shortName>
        </recommendedName>
    </component>
    <component>
        <recommendedName>
            <fullName>RNA-directed RNA polymerase NS5</fullName>
            <ecNumber evidence="16">2.1.1.56</ecNumber>
            <ecNumber evidence="16">2.1.1.57</ecNumber>
            <ecNumber evidence="12">2.7.7.48</ecNumber>
        </recommendedName>
        <alternativeName>
            <fullName>Non-structural protein 5</fullName>
        </alternativeName>
    </component>
</protein>
<dbReference type="EC" id="3.4.21.91"/>
<dbReference type="EC" id="3.6.1.15" evidence="10"/>
<dbReference type="EC" id="3.6.4.13" evidence="10"/>
<dbReference type="EC" id="2.1.1.56" evidence="16"/>
<dbReference type="EC" id="2.1.1.57" evidence="16"/>
<dbReference type="EC" id="2.7.7.48" evidence="12"/>
<dbReference type="EMBL" id="AY603338">
    <property type="protein sequence ID" value="AAT12476.1"/>
    <property type="molecule type" value="Genomic_RNA"/>
</dbReference>
<dbReference type="EMBL" id="AY572535">
    <property type="protein sequence ID" value="AAS78199.1"/>
    <property type="molecule type" value="Genomic_RNA"/>
</dbReference>
<dbReference type="BMRB" id="Q6J3P1"/>
<dbReference type="SMR" id="Q6J3P1"/>
<dbReference type="MEROPS" id="S07.001"/>
<dbReference type="Proteomes" id="UP000007532">
    <property type="component" value="Genome"/>
</dbReference>
<dbReference type="Proteomes" id="UP000141257">
    <property type="component" value="Genome"/>
</dbReference>
<dbReference type="GO" id="GO:0005576">
    <property type="term" value="C:extracellular region"/>
    <property type="evidence" value="ECO:0007669"/>
    <property type="project" value="UniProtKB-SubCell"/>
</dbReference>
<dbReference type="GO" id="GO:0044167">
    <property type="term" value="C:host cell endoplasmic reticulum membrane"/>
    <property type="evidence" value="ECO:0007669"/>
    <property type="project" value="UniProtKB-SubCell"/>
</dbReference>
<dbReference type="GO" id="GO:0042025">
    <property type="term" value="C:host cell nucleus"/>
    <property type="evidence" value="ECO:0007669"/>
    <property type="project" value="UniProtKB-SubCell"/>
</dbReference>
<dbReference type="GO" id="GO:0044220">
    <property type="term" value="C:host cell perinuclear region of cytoplasm"/>
    <property type="evidence" value="ECO:0007669"/>
    <property type="project" value="UniProtKB-SubCell"/>
</dbReference>
<dbReference type="GO" id="GO:0016020">
    <property type="term" value="C:membrane"/>
    <property type="evidence" value="ECO:0007669"/>
    <property type="project" value="UniProtKB-KW"/>
</dbReference>
<dbReference type="GO" id="GO:0019028">
    <property type="term" value="C:viral capsid"/>
    <property type="evidence" value="ECO:0007669"/>
    <property type="project" value="UniProtKB-KW"/>
</dbReference>
<dbReference type="GO" id="GO:0019031">
    <property type="term" value="C:viral envelope"/>
    <property type="evidence" value="ECO:0007669"/>
    <property type="project" value="UniProtKB-KW"/>
</dbReference>
<dbReference type="GO" id="GO:0055036">
    <property type="term" value="C:virion membrane"/>
    <property type="evidence" value="ECO:0007669"/>
    <property type="project" value="UniProtKB-SubCell"/>
</dbReference>
<dbReference type="GO" id="GO:0005524">
    <property type="term" value="F:ATP binding"/>
    <property type="evidence" value="ECO:0007669"/>
    <property type="project" value="UniProtKB-KW"/>
</dbReference>
<dbReference type="GO" id="GO:0016887">
    <property type="term" value="F:ATP hydrolysis activity"/>
    <property type="evidence" value="ECO:0007669"/>
    <property type="project" value="RHEA"/>
</dbReference>
<dbReference type="GO" id="GO:0003725">
    <property type="term" value="F:double-stranded RNA binding"/>
    <property type="evidence" value="ECO:0007669"/>
    <property type="project" value="InterPro"/>
</dbReference>
<dbReference type="GO" id="GO:0005525">
    <property type="term" value="F:GTP binding"/>
    <property type="evidence" value="ECO:0007669"/>
    <property type="project" value="UniProtKB-KW"/>
</dbReference>
<dbReference type="GO" id="GO:0046872">
    <property type="term" value="F:metal ion binding"/>
    <property type="evidence" value="ECO:0007669"/>
    <property type="project" value="UniProtKB-KW"/>
</dbReference>
<dbReference type="GO" id="GO:0004483">
    <property type="term" value="F:mRNA (nucleoside-2'-O-)-methyltransferase activity"/>
    <property type="evidence" value="ECO:0007669"/>
    <property type="project" value="UniProtKB-EC"/>
</dbReference>
<dbReference type="GO" id="GO:0004482">
    <property type="term" value="F:mRNA 5'-cap (guanine-N7-)-methyltransferase activity"/>
    <property type="evidence" value="ECO:0007669"/>
    <property type="project" value="UniProtKB-EC"/>
</dbReference>
<dbReference type="GO" id="GO:0046983">
    <property type="term" value="F:protein dimerization activity"/>
    <property type="evidence" value="ECO:0007669"/>
    <property type="project" value="InterPro"/>
</dbReference>
<dbReference type="GO" id="GO:0003724">
    <property type="term" value="F:RNA helicase activity"/>
    <property type="evidence" value="ECO:0007669"/>
    <property type="project" value="UniProtKB-EC"/>
</dbReference>
<dbReference type="GO" id="GO:0003968">
    <property type="term" value="F:RNA-directed RNA polymerase activity"/>
    <property type="evidence" value="ECO:0007669"/>
    <property type="project" value="UniProtKB-KW"/>
</dbReference>
<dbReference type="GO" id="GO:0004252">
    <property type="term" value="F:serine-type endopeptidase activity"/>
    <property type="evidence" value="ECO:0007669"/>
    <property type="project" value="InterPro"/>
</dbReference>
<dbReference type="GO" id="GO:0005198">
    <property type="term" value="F:structural molecule activity"/>
    <property type="evidence" value="ECO:0007669"/>
    <property type="project" value="InterPro"/>
</dbReference>
<dbReference type="GO" id="GO:0075512">
    <property type="term" value="P:clathrin-dependent endocytosis of virus by host cell"/>
    <property type="evidence" value="ECO:0007669"/>
    <property type="project" value="UniProtKB-KW"/>
</dbReference>
<dbReference type="GO" id="GO:0039654">
    <property type="term" value="P:fusion of virus membrane with host endosome membrane"/>
    <property type="evidence" value="ECO:0007669"/>
    <property type="project" value="UniProtKB-KW"/>
</dbReference>
<dbReference type="GO" id="GO:0006508">
    <property type="term" value="P:proteolysis"/>
    <property type="evidence" value="ECO:0007669"/>
    <property type="project" value="UniProtKB-KW"/>
</dbReference>
<dbReference type="GO" id="GO:0039520">
    <property type="term" value="P:symbiont-mediated activation of host autophagy"/>
    <property type="evidence" value="ECO:0007669"/>
    <property type="project" value="UniProtKB-KW"/>
</dbReference>
<dbReference type="GO" id="GO:0052170">
    <property type="term" value="P:symbiont-mediated suppression of host innate immune response"/>
    <property type="evidence" value="ECO:0007669"/>
    <property type="project" value="UniProtKB-KW"/>
</dbReference>
<dbReference type="GO" id="GO:0039564">
    <property type="term" value="P:symbiont-mediated suppression of host JAK-STAT cascade via inhibition of STAT2 activity"/>
    <property type="evidence" value="ECO:0007669"/>
    <property type="project" value="UniProtKB-KW"/>
</dbReference>
<dbReference type="GO" id="GO:0039502">
    <property type="term" value="P:symbiont-mediated suppression of host type I interferon-mediated signaling pathway"/>
    <property type="evidence" value="ECO:0007669"/>
    <property type="project" value="UniProtKB-KW"/>
</dbReference>
<dbReference type="GO" id="GO:0039694">
    <property type="term" value="P:viral RNA genome replication"/>
    <property type="evidence" value="ECO:0007669"/>
    <property type="project" value="InterPro"/>
</dbReference>
<dbReference type="GO" id="GO:0019062">
    <property type="term" value="P:virion attachment to host cell"/>
    <property type="evidence" value="ECO:0007669"/>
    <property type="project" value="UniProtKB-KW"/>
</dbReference>
<dbReference type="CDD" id="cd20761">
    <property type="entry name" value="capping_2-OMTase_Flaviviridae"/>
    <property type="match status" value="1"/>
</dbReference>
<dbReference type="CDD" id="cd17931">
    <property type="entry name" value="DEXHc_viral_Ns3"/>
    <property type="match status" value="1"/>
</dbReference>
<dbReference type="CDD" id="cd12149">
    <property type="entry name" value="Flavi_E_C"/>
    <property type="match status" value="1"/>
</dbReference>
<dbReference type="CDD" id="cd17038">
    <property type="entry name" value="Flavi_M"/>
    <property type="match status" value="1"/>
</dbReference>
<dbReference type="CDD" id="cd23204">
    <property type="entry name" value="Flavivirus_RdRp"/>
    <property type="match status" value="1"/>
</dbReference>
<dbReference type="FunFam" id="1.20.1280.260:FF:000001">
    <property type="entry name" value="Envelope glycoprotein"/>
    <property type="match status" value="1"/>
</dbReference>
<dbReference type="FunFam" id="1.10.260.90:FF:000001">
    <property type="entry name" value="Genome polyprotein"/>
    <property type="match status" value="1"/>
</dbReference>
<dbReference type="FunFam" id="2.40.10.120:FF:000006">
    <property type="entry name" value="Genome polyprotein"/>
    <property type="match status" value="1"/>
</dbReference>
<dbReference type="FunFam" id="2.60.260.50:FF:000001">
    <property type="entry name" value="Genome polyprotein"/>
    <property type="match status" value="1"/>
</dbReference>
<dbReference type="FunFam" id="3.30.70.2840:FF:000001">
    <property type="entry name" value="Genome polyprotein"/>
    <property type="match status" value="1"/>
</dbReference>
<dbReference type="FunFam" id="3.30.70.2840:FF:000002">
    <property type="entry name" value="Genome polyprotein"/>
    <property type="match status" value="1"/>
</dbReference>
<dbReference type="FunFam" id="3.40.50.150:FF:000105">
    <property type="entry name" value="Genome polyprotein"/>
    <property type="match status" value="1"/>
</dbReference>
<dbReference type="FunFam" id="3.40.50.300:FF:000763">
    <property type="entry name" value="Genome polyprotein"/>
    <property type="match status" value="1"/>
</dbReference>
<dbReference type="Gene3D" id="1.10.10.930">
    <property type="match status" value="1"/>
</dbReference>
<dbReference type="Gene3D" id="1.10.260.90">
    <property type="match status" value="1"/>
</dbReference>
<dbReference type="Gene3D" id="1.20.1280.260">
    <property type="match status" value="1"/>
</dbReference>
<dbReference type="Gene3D" id="2.40.10.120">
    <property type="match status" value="2"/>
</dbReference>
<dbReference type="Gene3D" id="2.60.40.350">
    <property type="match status" value="1"/>
</dbReference>
<dbReference type="Gene3D" id="1.10.8.970">
    <property type="entry name" value="Flavivirus envelope glycoprotein M-like"/>
    <property type="match status" value="1"/>
</dbReference>
<dbReference type="Gene3D" id="2.60.260.50">
    <property type="entry name" value="Flavivirus polyprotein propeptide domain"/>
    <property type="match status" value="1"/>
</dbReference>
<dbReference type="Gene3D" id="3.30.70.2840">
    <property type="entry name" value="Flavivirus RNA-directed RNA polymerase, thumb domain"/>
    <property type="match status" value="3"/>
</dbReference>
<dbReference type="Gene3D" id="3.40.50.300">
    <property type="entry name" value="P-loop containing nucleotide triphosphate hydrolases"/>
    <property type="match status" value="2"/>
</dbReference>
<dbReference type="Gene3D" id="2.60.98.10">
    <property type="entry name" value="Tick-borne Encephalitis virus Glycoprotein, domain 1"/>
    <property type="match status" value="1"/>
</dbReference>
<dbReference type="Gene3D" id="3.40.50.150">
    <property type="entry name" value="Vaccinia Virus protein VP39"/>
    <property type="match status" value="1"/>
</dbReference>
<dbReference type="Gene3D" id="3.30.67.10">
    <property type="entry name" value="Viral Envelope Glycoprotein, domain 2"/>
    <property type="match status" value="1"/>
</dbReference>
<dbReference type="Gene3D" id="3.30.387.10">
    <property type="entry name" value="Viral Envelope Glycoprotein, domain 3"/>
    <property type="match status" value="1"/>
</dbReference>
<dbReference type="InterPro" id="IPR043502">
    <property type="entry name" value="DNA/RNA_pol_sf"/>
</dbReference>
<dbReference type="InterPro" id="IPR000069">
    <property type="entry name" value="Env_glycoprot_M_flavivir"/>
</dbReference>
<dbReference type="InterPro" id="IPR038302">
    <property type="entry name" value="Env_glycoprot_M_sf_flavivir"/>
</dbReference>
<dbReference type="InterPro" id="IPR013755">
    <property type="entry name" value="Flav_gly_cen_dom_subdom1"/>
</dbReference>
<dbReference type="InterPro" id="IPR001122">
    <property type="entry name" value="Flavi_capsidC"/>
</dbReference>
<dbReference type="InterPro" id="IPR037172">
    <property type="entry name" value="Flavi_capsidC_sf"/>
</dbReference>
<dbReference type="InterPro" id="IPR011492">
    <property type="entry name" value="Flavi_DEAD"/>
</dbReference>
<dbReference type="InterPro" id="IPR027287">
    <property type="entry name" value="Flavi_E_Ig-like"/>
</dbReference>
<dbReference type="InterPro" id="IPR026470">
    <property type="entry name" value="Flavi_E_Stem/Anchor_dom"/>
</dbReference>
<dbReference type="InterPro" id="IPR038345">
    <property type="entry name" value="Flavi_E_Stem/Anchor_dom_sf"/>
</dbReference>
<dbReference type="InterPro" id="IPR011998">
    <property type="entry name" value="Flavi_Glycoprot_E_cen/dimer"/>
</dbReference>
<dbReference type="InterPro" id="IPR001157">
    <property type="entry name" value="Flavi_NS1"/>
</dbReference>
<dbReference type="InterPro" id="IPR000752">
    <property type="entry name" value="Flavi_NS2A"/>
</dbReference>
<dbReference type="InterPro" id="IPR000487">
    <property type="entry name" value="Flavi_NS2B"/>
</dbReference>
<dbReference type="InterPro" id="IPR001850">
    <property type="entry name" value="Flavi_NS3_S7"/>
</dbReference>
<dbReference type="InterPro" id="IPR000404">
    <property type="entry name" value="Flavi_NS4A"/>
</dbReference>
<dbReference type="InterPro" id="IPR001528">
    <property type="entry name" value="Flavi_NS4B"/>
</dbReference>
<dbReference type="InterPro" id="IPR046811">
    <property type="entry name" value="Flavi_NS5_thumb"/>
</dbReference>
<dbReference type="InterPro" id="IPR002535">
    <property type="entry name" value="Flavi_propep"/>
</dbReference>
<dbReference type="InterPro" id="IPR038688">
    <property type="entry name" value="Flavi_propep_sf"/>
</dbReference>
<dbReference type="InterPro" id="IPR047530">
    <property type="entry name" value="Flavi_RdRp"/>
</dbReference>
<dbReference type="InterPro" id="IPR000208">
    <property type="entry name" value="Flavi_RdRp_fingers/palm"/>
</dbReference>
<dbReference type="InterPro" id="IPR000336">
    <property type="entry name" value="Flavivir/Alphavir_Ig-like_sf"/>
</dbReference>
<dbReference type="InterPro" id="IPR014412">
    <property type="entry name" value="Gen_Poly_FLV"/>
</dbReference>
<dbReference type="InterPro" id="IPR036253">
    <property type="entry name" value="Glycoprot_cen/dimer_sf"/>
</dbReference>
<dbReference type="InterPro" id="IPR038055">
    <property type="entry name" value="Glycoprot_E_dimer_dom"/>
</dbReference>
<dbReference type="InterPro" id="IPR013756">
    <property type="entry name" value="GlyE_cen_dom_subdom2"/>
</dbReference>
<dbReference type="InterPro" id="IPR014001">
    <property type="entry name" value="Helicase_ATP-bd"/>
</dbReference>
<dbReference type="InterPro" id="IPR001650">
    <property type="entry name" value="Helicase_C-like"/>
</dbReference>
<dbReference type="InterPro" id="IPR014756">
    <property type="entry name" value="Ig_E-set"/>
</dbReference>
<dbReference type="InterPro" id="IPR026490">
    <property type="entry name" value="mRNA_cap_0/1_MeTrfase"/>
</dbReference>
<dbReference type="InterPro" id="IPR049486">
    <property type="entry name" value="NS3-hel_C_flaviviridae"/>
</dbReference>
<dbReference type="InterPro" id="IPR027417">
    <property type="entry name" value="P-loop_NTPase"/>
</dbReference>
<dbReference type="InterPro" id="IPR009003">
    <property type="entry name" value="Peptidase_S1_PA"/>
</dbReference>
<dbReference type="InterPro" id="IPR007094">
    <property type="entry name" value="RNA-dir_pol_PSvirus"/>
</dbReference>
<dbReference type="InterPro" id="IPR002877">
    <property type="entry name" value="RNA_MeTrfase_FtsJ_dom"/>
</dbReference>
<dbReference type="InterPro" id="IPR029063">
    <property type="entry name" value="SAM-dependent_MTases_sf"/>
</dbReference>
<dbReference type="NCBIfam" id="TIGR04240">
    <property type="entry name" value="flavi_E_stem"/>
    <property type="match status" value="1"/>
</dbReference>
<dbReference type="Pfam" id="PF20907">
    <property type="entry name" value="Flav_NS3-hel_C"/>
    <property type="match status" value="1"/>
</dbReference>
<dbReference type="Pfam" id="PF01003">
    <property type="entry name" value="Flavi_capsid"/>
    <property type="match status" value="1"/>
</dbReference>
<dbReference type="Pfam" id="PF07652">
    <property type="entry name" value="Flavi_DEAD"/>
    <property type="match status" value="1"/>
</dbReference>
<dbReference type="Pfam" id="PF21659">
    <property type="entry name" value="Flavi_E_stem"/>
    <property type="match status" value="1"/>
</dbReference>
<dbReference type="Pfam" id="PF02832">
    <property type="entry name" value="Flavi_glycop_C"/>
    <property type="match status" value="1"/>
</dbReference>
<dbReference type="Pfam" id="PF00869">
    <property type="entry name" value="Flavi_glycoprot"/>
    <property type="match status" value="1"/>
</dbReference>
<dbReference type="Pfam" id="PF01004">
    <property type="entry name" value="Flavi_M"/>
    <property type="match status" value="1"/>
</dbReference>
<dbReference type="Pfam" id="PF00948">
    <property type="entry name" value="Flavi_NS1"/>
    <property type="match status" value="1"/>
</dbReference>
<dbReference type="Pfam" id="PF01005">
    <property type="entry name" value="Flavi_NS2A"/>
    <property type="match status" value="1"/>
</dbReference>
<dbReference type="Pfam" id="PF01002">
    <property type="entry name" value="Flavi_NS2B"/>
    <property type="match status" value="1"/>
</dbReference>
<dbReference type="Pfam" id="PF01350">
    <property type="entry name" value="Flavi_NS4A"/>
    <property type="match status" value="1"/>
</dbReference>
<dbReference type="Pfam" id="PF01349">
    <property type="entry name" value="Flavi_NS4B"/>
    <property type="match status" value="1"/>
</dbReference>
<dbReference type="Pfam" id="PF00972">
    <property type="entry name" value="Flavi_NS5"/>
    <property type="match status" value="1"/>
</dbReference>
<dbReference type="Pfam" id="PF20483">
    <property type="entry name" value="Flavi_NS5_thumb"/>
    <property type="match status" value="1"/>
</dbReference>
<dbReference type="Pfam" id="PF01570">
    <property type="entry name" value="Flavi_propep"/>
    <property type="match status" value="1"/>
</dbReference>
<dbReference type="Pfam" id="PF01728">
    <property type="entry name" value="FtsJ"/>
    <property type="match status" value="1"/>
</dbReference>
<dbReference type="Pfam" id="PF00949">
    <property type="entry name" value="Peptidase_S7"/>
    <property type="match status" value="1"/>
</dbReference>
<dbReference type="PIRSF" id="PIRSF003817">
    <property type="entry name" value="Gen_Poly_FLV"/>
    <property type="match status" value="1"/>
</dbReference>
<dbReference type="SMART" id="SM00487">
    <property type="entry name" value="DEXDc"/>
    <property type="match status" value="1"/>
</dbReference>
<dbReference type="SMART" id="SM00490">
    <property type="entry name" value="HELICc"/>
    <property type="match status" value="1"/>
</dbReference>
<dbReference type="SUPFAM" id="SSF56672">
    <property type="entry name" value="DNA/RNA polymerases"/>
    <property type="match status" value="1"/>
</dbReference>
<dbReference type="SUPFAM" id="SSF81296">
    <property type="entry name" value="E set domains"/>
    <property type="match status" value="1"/>
</dbReference>
<dbReference type="SUPFAM" id="SSF52540">
    <property type="entry name" value="P-loop containing nucleoside triphosphate hydrolases"/>
    <property type="match status" value="2"/>
</dbReference>
<dbReference type="SUPFAM" id="SSF53335">
    <property type="entry name" value="S-adenosyl-L-methionine-dependent methyltransferases"/>
    <property type="match status" value="1"/>
</dbReference>
<dbReference type="SUPFAM" id="SSF50494">
    <property type="entry name" value="Trypsin-like serine proteases"/>
    <property type="match status" value="1"/>
</dbReference>
<dbReference type="SUPFAM" id="SSF56983">
    <property type="entry name" value="Viral glycoprotein, central and dimerisation domains"/>
    <property type="match status" value="1"/>
</dbReference>
<dbReference type="PROSITE" id="PS51527">
    <property type="entry name" value="FLAVIVIRUS_NS2B"/>
    <property type="match status" value="1"/>
</dbReference>
<dbReference type="PROSITE" id="PS51528">
    <property type="entry name" value="FLAVIVIRUS_NS3PRO"/>
    <property type="match status" value="1"/>
</dbReference>
<dbReference type="PROSITE" id="PS51192">
    <property type="entry name" value="HELICASE_ATP_BIND_1"/>
    <property type="match status" value="1"/>
</dbReference>
<dbReference type="PROSITE" id="PS51194">
    <property type="entry name" value="HELICASE_CTER"/>
    <property type="match status" value="1"/>
</dbReference>
<dbReference type="PROSITE" id="PS50507">
    <property type="entry name" value="RDRP_SSRNA_POS"/>
    <property type="match status" value="1"/>
</dbReference>
<dbReference type="PROSITE" id="PS51591">
    <property type="entry name" value="RNA_CAP01_NS5_MT"/>
    <property type="match status" value="1"/>
</dbReference>
<keyword id="KW-0007">Acetylation</keyword>
<keyword id="KW-1072">Activation of host autophagy by virus</keyword>
<keyword id="KW-0067">ATP-binding</keyword>
<keyword id="KW-0167">Capsid protein</keyword>
<keyword id="KW-1165">Clathrin-mediated endocytosis of virus by host</keyword>
<keyword id="KW-0165">Cleavage on pair of basic residues</keyword>
<keyword id="KW-1015">Disulfide bond</keyword>
<keyword id="KW-1170">Fusion of virus membrane with host endosomal membrane</keyword>
<keyword id="KW-1168">Fusion of virus membrane with host membrane</keyword>
<keyword id="KW-0325">Glycoprotein</keyword>
<keyword id="KW-0342">GTP-binding</keyword>
<keyword id="KW-0347">Helicase</keyword>
<keyword id="KW-1035">Host cytoplasm</keyword>
<keyword id="KW-1038">Host endoplasmic reticulum</keyword>
<keyword id="KW-1043">Host membrane</keyword>
<keyword id="KW-1048">Host nucleus</keyword>
<keyword id="KW-0945">Host-virus interaction</keyword>
<keyword id="KW-0378">Hydrolase</keyword>
<keyword id="KW-1090">Inhibition of host innate immune response by virus</keyword>
<keyword id="KW-1114">Inhibition of host interferon signaling pathway by virus</keyword>
<keyword id="KW-1106">Inhibition of host STAT2 by virus</keyword>
<keyword id="KW-0922">Interferon antiviral system evasion</keyword>
<keyword id="KW-0472">Membrane</keyword>
<keyword id="KW-0479">Metal-binding</keyword>
<keyword id="KW-0489">Methyltransferase</keyword>
<keyword id="KW-0506">mRNA capping</keyword>
<keyword id="KW-0507">mRNA processing</keyword>
<keyword id="KW-0511">Multifunctional enzyme</keyword>
<keyword id="KW-0547">Nucleotide-binding</keyword>
<keyword id="KW-0548">Nucleotidyltransferase</keyword>
<keyword id="KW-0597">Phosphoprotein</keyword>
<keyword id="KW-0645">Protease</keyword>
<keyword id="KW-0694">RNA-binding</keyword>
<keyword id="KW-0696">RNA-directed RNA polymerase</keyword>
<keyword id="KW-0949">S-adenosyl-L-methionine</keyword>
<keyword id="KW-0964">Secreted</keyword>
<keyword id="KW-0720">Serine protease</keyword>
<keyword id="KW-0941">Suppressor of RNA silencing</keyword>
<keyword id="KW-0804">Transcription</keyword>
<keyword id="KW-0805">Transcription regulation</keyword>
<keyword id="KW-0808">Transferase</keyword>
<keyword id="KW-0812">Transmembrane</keyword>
<keyword id="KW-1133">Transmembrane helix</keyword>
<keyword id="KW-0832">Ubl conjugation</keyword>
<keyword id="KW-1161">Viral attachment to host cell</keyword>
<keyword id="KW-0261">Viral envelope protein</keyword>
<keyword id="KW-0899">Viral immunoevasion</keyword>
<keyword id="KW-1162">Viral penetration into host cytoplasm</keyword>
<keyword id="KW-0693">Viral RNA replication</keyword>
<keyword id="KW-0946">Virion</keyword>
<keyword id="KW-1164">Virus endocytosis by host</keyword>
<keyword id="KW-1160">Virus entry into host cell</keyword>
<keyword id="KW-0862">Zinc</keyword>
<proteinExistence type="inferred from homology"/>
<reference key="1">
    <citation type="journal article" date="2005" name="J. Clin. Virol.">
        <title>Analysis of two imported cases of yellow fever infection from Ivory Coast and The Gambia to Germany and Belgium.</title>
        <authorList>
            <person name="Bae H.-G."/>
            <person name="Drosten C."/>
            <person name="Emmerich P."/>
            <person name="Colebunders R."/>
            <person name="Hantson P."/>
            <person name="Pest S."/>
            <person name="Parent M."/>
            <person name="Schmitz H."/>
            <person name="Warnat M.-A."/>
            <person name="Niedrig M."/>
        </authorList>
    </citation>
    <scope>NUCLEOTIDE SEQUENCE [GENOMIC RNA]</scope>
    <source>
        <strain>Isolate Gambia/2001</strain>
        <strain>Isolate Ivory Coast/1999</strain>
    </source>
</reference>